<dbReference type="EC" id="3.4.11.2" evidence="1"/>
<dbReference type="EMBL" id="S68687">
    <property type="protein sequence ID" value="AAB29534.1"/>
    <property type="molecule type" value="mRNA"/>
</dbReference>
<dbReference type="EMBL" id="X51508">
    <property type="protein sequence ID" value="CAA35873.1"/>
    <property type="molecule type" value="mRNA"/>
</dbReference>
<dbReference type="PIR" id="S07099">
    <property type="entry name" value="S07099"/>
</dbReference>
<dbReference type="RefSeq" id="NP_001075795.1">
    <property type="nucleotide sequence ID" value="NM_001082326.1"/>
</dbReference>
<dbReference type="SMR" id="P15541"/>
<dbReference type="FunCoup" id="P15541">
    <property type="interactions" value="23"/>
</dbReference>
<dbReference type="STRING" id="9986.ENSOCUP00000015166"/>
<dbReference type="MEROPS" id="M01.001"/>
<dbReference type="GlyCosmos" id="P15541">
    <property type="glycosylation" value="9 sites, No reported glycans"/>
</dbReference>
<dbReference type="PaxDb" id="9986-ENSOCUP00000015166"/>
<dbReference type="GeneID" id="100009167"/>
<dbReference type="KEGG" id="ocu:100009167"/>
<dbReference type="CTD" id="290"/>
<dbReference type="eggNOG" id="KOG1046">
    <property type="taxonomic scope" value="Eukaryota"/>
</dbReference>
<dbReference type="InParanoid" id="P15541"/>
<dbReference type="OrthoDB" id="510539at2759"/>
<dbReference type="Proteomes" id="UP000001811">
    <property type="component" value="Unplaced"/>
</dbReference>
<dbReference type="GO" id="GO:0005737">
    <property type="term" value="C:cytoplasm"/>
    <property type="evidence" value="ECO:0007669"/>
    <property type="project" value="TreeGrafter"/>
</dbReference>
<dbReference type="GO" id="GO:0005615">
    <property type="term" value="C:extracellular space"/>
    <property type="evidence" value="ECO:0007669"/>
    <property type="project" value="TreeGrafter"/>
</dbReference>
<dbReference type="GO" id="GO:0005886">
    <property type="term" value="C:plasma membrane"/>
    <property type="evidence" value="ECO:0000250"/>
    <property type="project" value="UniProtKB"/>
</dbReference>
<dbReference type="GO" id="GO:0016285">
    <property type="term" value="F:alanyl aminopeptidase activity"/>
    <property type="evidence" value="ECO:0007669"/>
    <property type="project" value="UniProtKB-EC"/>
</dbReference>
<dbReference type="GO" id="GO:0070006">
    <property type="term" value="F:metalloaminopeptidase activity"/>
    <property type="evidence" value="ECO:0007669"/>
    <property type="project" value="TreeGrafter"/>
</dbReference>
<dbReference type="GO" id="GO:0008237">
    <property type="term" value="F:metallopeptidase activity"/>
    <property type="evidence" value="ECO:0000269"/>
    <property type="project" value="Reactome"/>
</dbReference>
<dbReference type="GO" id="GO:0042277">
    <property type="term" value="F:peptide binding"/>
    <property type="evidence" value="ECO:0007669"/>
    <property type="project" value="TreeGrafter"/>
</dbReference>
<dbReference type="GO" id="GO:0008270">
    <property type="term" value="F:zinc ion binding"/>
    <property type="evidence" value="ECO:0007669"/>
    <property type="project" value="InterPro"/>
</dbReference>
<dbReference type="GO" id="GO:0001525">
    <property type="term" value="P:angiogenesis"/>
    <property type="evidence" value="ECO:0007669"/>
    <property type="project" value="UniProtKB-KW"/>
</dbReference>
<dbReference type="GO" id="GO:0030154">
    <property type="term" value="P:cell differentiation"/>
    <property type="evidence" value="ECO:0007669"/>
    <property type="project" value="UniProtKB-KW"/>
</dbReference>
<dbReference type="GO" id="GO:0043171">
    <property type="term" value="P:peptide catabolic process"/>
    <property type="evidence" value="ECO:0007669"/>
    <property type="project" value="TreeGrafter"/>
</dbReference>
<dbReference type="GO" id="GO:0006508">
    <property type="term" value="P:proteolysis"/>
    <property type="evidence" value="ECO:0007669"/>
    <property type="project" value="UniProtKB-KW"/>
</dbReference>
<dbReference type="CDD" id="cd09601">
    <property type="entry name" value="M1_APN-Q_like"/>
    <property type="match status" value="1"/>
</dbReference>
<dbReference type="FunFam" id="2.60.40.1910:FF:000005">
    <property type="entry name" value="Aminopeptidase"/>
    <property type="match status" value="1"/>
</dbReference>
<dbReference type="FunFam" id="1.25.50.20:FF:000012">
    <property type="entry name" value="Aminopeptidase N"/>
    <property type="match status" value="1"/>
</dbReference>
<dbReference type="FunFam" id="2.60.40.1730:FF:000012">
    <property type="entry name" value="Aminopeptidase N"/>
    <property type="match status" value="1"/>
</dbReference>
<dbReference type="FunFam" id="1.10.390.10:FF:000016">
    <property type="entry name" value="Glutamyl aminopeptidase"/>
    <property type="match status" value="1"/>
</dbReference>
<dbReference type="Gene3D" id="1.25.50.20">
    <property type="match status" value="1"/>
</dbReference>
<dbReference type="Gene3D" id="2.60.40.1910">
    <property type="match status" value="1"/>
</dbReference>
<dbReference type="Gene3D" id="1.10.390.10">
    <property type="entry name" value="Neutral Protease Domain 2"/>
    <property type="match status" value="1"/>
</dbReference>
<dbReference type="Gene3D" id="2.60.40.1730">
    <property type="entry name" value="tricorn interacting facor f3 domain"/>
    <property type="match status" value="1"/>
</dbReference>
<dbReference type="InterPro" id="IPR045357">
    <property type="entry name" value="Aminopeptidase_N-like_N"/>
</dbReference>
<dbReference type="InterPro" id="IPR042097">
    <property type="entry name" value="Aminopeptidase_N-like_N_sf"/>
</dbReference>
<dbReference type="InterPro" id="IPR024571">
    <property type="entry name" value="ERAP1-like_C_dom"/>
</dbReference>
<dbReference type="InterPro" id="IPR034016">
    <property type="entry name" value="M1_APN-typ"/>
</dbReference>
<dbReference type="InterPro" id="IPR001930">
    <property type="entry name" value="Peptidase_M1"/>
</dbReference>
<dbReference type="InterPro" id="IPR050344">
    <property type="entry name" value="Peptidase_M1_aminopeptidases"/>
</dbReference>
<dbReference type="InterPro" id="IPR014782">
    <property type="entry name" value="Peptidase_M1_dom"/>
</dbReference>
<dbReference type="InterPro" id="IPR027268">
    <property type="entry name" value="Peptidase_M4/M1_CTD_sf"/>
</dbReference>
<dbReference type="PANTHER" id="PTHR11533:SF172">
    <property type="entry name" value="AMINOPEPTIDASE N"/>
    <property type="match status" value="1"/>
</dbReference>
<dbReference type="PANTHER" id="PTHR11533">
    <property type="entry name" value="PROTEASE M1 ZINC METALLOPROTEASE"/>
    <property type="match status" value="1"/>
</dbReference>
<dbReference type="Pfam" id="PF11838">
    <property type="entry name" value="ERAP1_C"/>
    <property type="match status" value="1"/>
</dbReference>
<dbReference type="Pfam" id="PF01433">
    <property type="entry name" value="Peptidase_M1"/>
    <property type="match status" value="1"/>
</dbReference>
<dbReference type="Pfam" id="PF17900">
    <property type="entry name" value="Peptidase_M1_N"/>
    <property type="match status" value="1"/>
</dbReference>
<dbReference type="PRINTS" id="PR00756">
    <property type="entry name" value="ALADIPTASE"/>
</dbReference>
<dbReference type="SUPFAM" id="SSF63737">
    <property type="entry name" value="Leukotriene A4 hydrolase N-terminal domain"/>
    <property type="match status" value="1"/>
</dbReference>
<dbReference type="SUPFAM" id="SSF55486">
    <property type="entry name" value="Metalloproteases ('zincins'), catalytic domain"/>
    <property type="match status" value="1"/>
</dbReference>
<dbReference type="PROSITE" id="PS00142">
    <property type="entry name" value="ZINC_PROTEASE"/>
    <property type="match status" value="1"/>
</dbReference>
<feature type="chain" id="PRO_0000095084" description="Aminopeptidase N">
    <location>
        <begin position="1"/>
        <end position="966"/>
    </location>
</feature>
<feature type="topological domain" description="Cytoplasmic" evidence="1">
    <location>
        <begin position="1"/>
        <end position="8"/>
    </location>
</feature>
<feature type="transmembrane region" description="Helical; Signal-anchor for type II membrane protein" evidence="4">
    <location>
        <begin position="9"/>
        <end position="32"/>
    </location>
</feature>
<feature type="topological domain" description="Extracellular" evidence="1">
    <location>
        <begin position="33"/>
        <end position="966"/>
    </location>
</feature>
<feature type="region of interest" description="Cytosolic Ser/Thr-rich junction">
    <location>
        <begin position="33"/>
        <end position="65"/>
    </location>
</feature>
<feature type="region of interest" description="Disordered" evidence="6">
    <location>
        <begin position="40"/>
        <end position="61"/>
    </location>
</feature>
<feature type="region of interest" description="Metalloprotease">
    <location>
        <begin position="66"/>
        <end position="966"/>
    </location>
</feature>
<feature type="active site" description="Proton acceptor" evidence="5">
    <location>
        <position position="385"/>
    </location>
</feature>
<feature type="binding site" evidence="1">
    <location>
        <begin position="348"/>
        <end position="352"/>
    </location>
    <ligand>
        <name>substrate</name>
    </ligand>
</feature>
<feature type="binding site" evidence="5">
    <location>
        <position position="384"/>
    </location>
    <ligand>
        <name>Zn(2+)</name>
        <dbReference type="ChEBI" id="CHEBI:29105"/>
        <note>catalytic</note>
    </ligand>
</feature>
<feature type="binding site" evidence="5">
    <location>
        <position position="388"/>
    </location>
    <ligand>
        <name>Zn(2+)</name>
        <dbReference type="ChEBI" id="CHEBI:29105"/>
        <note>catalytic</note>
    </ligand>
</feature>
<feature type="binding site" evidence="5">
    <location>
        <position position="407"/>
    </location>
    <ligand>
        <name>Zn(2+)</name>
        <dbReference type="ChEBI" id="CHEBI:29105"/>
        <note>catalytic</note>
    </ligand>
</feature>
<feature type="site" description="Transition state stabilizer" evidence="1">
    <location>
        <position position="473"/>
    </location>
</feature>
<feature type="modified residue" description="Sulfotyrosine" evidence="4">
    <location>
        <position position="173"/>
    </location>
</feature>
<feature type="modified residue" description="Sulfotyrosine" evidence="4">
    <location>
        <position position="415"/>
    </location>
</feature>
<feature type="modified residue" description="Sulfotyrosine" evidence="4">
    <location>
        <position position="420"/>
    </location>
</feature>
<feature type="modified residue" description="Phosphotyrosine" evidence="3">
    <location>
        <position position="852"/>
    </location>
</feature>
<feature type="modified residue" description="Sulfotyrosine" evidence="4">
    <location>
        <position position="912"/>
    </location>
</feature>
<feature type="glycosylation site" description="N-linked (GlcNAc...) asparagine" evidence="4">
    <location>
        <position position="40"/>
    </location>
</feature>
<feature type="glycosylation site" description="N-linked (GlcNAc...) asparagine" evidence="4">
    <location>
        <position position="125"/>
    </location>
</feature>
<feature type="glycosylation site" description="N-linked (GlcNAc...) asparagine" evidence="4">
    <location>
        <position position="259"/>
    </location>
</feature>
<feature type="glycosylation site" description="N-linked (GlcNAc...) asparagine" evidence="4">
    <location>
        <position position="315"/>
    </location>
</feature>
<feature type="glycosylation site" description="N-linked (GlcNAc...) asparagine" evidence="4">
    <location>
        <position position="552"/>
    </location>
</feature>
<feature type="glycosylation site" description="N-linked (GlcNAc...) asparagine" evidence="4">
    <location>
        <position position="570"/>
    </location>
</feature>
<feature type="glycosylation site" description="N-linked (GlcNAc...) asparagine" evidence="4">
    <location>
        <position position="624"/>
    </location>
</feature>
<feature type="glycosylation site" description="N-linked (GlcNAc...) asparagine" evidence="4">
    <location>
        <position position="734"/>
    </location>
</feature>
<feature type="glycosylation site" description="N-linked (GlcNAc...) asparagine" evidence="4">
    <location>
        <position position="817"/>
    </location>
</feature>
<feature type="disulfide bond" evidence="1">
    <location>
        <begin position="760"/>
        <end position="767"/>
    </location>
</feature>
<feature type="disulfide bond" evidence="1">
    <location>
        <begin position="797"/>
        <end position="833"/>
    </location>
</feature>
<feature type="sequence conflict" description="In Ref. 2; AA sequence." evidence="7" ref="2">
    <original>S</original>
    <variation>A</variation>
    <location>
        <position position="10"/>
    </location>
</feature>
<feature type="sequence conflict" description="In Ref. 2; AA sequence." evidence="7" ref="2">
    <original>I</original>
    <variation>F</variation>
    <location>
        <position position="16"/>
    </location>
</feature>
<feature type="sequence conflict" description="In Ref. 3." evidence="7" ref="3">
    <original>Q</original>
    <variation>QMQ</variation>
    <location>
        <position position="210"/>
    </location>
</feature>
<feature type="sequence conflict" description="In Ref. 3; CAA35873." evidence="7" ref="3">
    <original>M</original>
    <variation>S</variation>
    <location>
        <position position="226"/>
    </location>
</feature>
<feature type="sequence conflict" description="In Ref. 3; CAA35873." evidence="7" ref="3">
    <original>P</original>
    <variation>L</variation>
    <location>
        <position position="234"/>
    </location>
</feature>
<feature type="sequence conflict" description="In Ref. 3; CAA35873." evidence="7" ref="3">
    <original>LE</original>
    <variation>QQ</variation>
    <location>
        <begin position="593"/>
        <end position="594"/>
    </location>
</feature>
<protein>
    <recommendedName>
        <fullName evidence="7">Aminopeptidase N</fullName>
        <shortName>AP-N</shortName>
        <shortName>rbAPN</shortName>
        <ecNumber evidence="1">3.4.11.2</ecNumber>
    </recommendedName>
    <alternativeName>
        <fullName>Alanyl aminopeptidase</fullName>
    </alternativeName>
    <alternativeName>
        <fullName>Aminopeptidase M</fullName>
        <shortName>AP-M</shortName>
    </alternativeName>
    <alternativeName>
        <fullName>Microsomal aminopeptidase</fullName>
    </alternativeName>
    <cdAntigenName>CD13</cdAntigenName>
</protein>
<gene>
    <name type="primary">ANPEP</name>
</gene>
<keyword id="KW-0031">Aminopeptidase</keyword>
<keyword id="KW-0037">Angiogenesis</keyword>
<keyword id="KW-1003">Cell membrane</keyword>
<keyword id="KW-0217">Developmental protein</keyword>
<keyword id="KW-0221">Differentiation</keyword>
<keyword id="KW-0903">Direct protein sequencing</keyword>
<keyword id="KW-1015">Disulfide bond</keyword>
<keyword id="KW-0325">Glycoprotein</keyword>
<keyword id="KW-0378">Hydrolase</keyword>
<keyword id="KW-0472">Membrane</keyword>
<keyword id="KW-0479">Metal-binding</keyword>
<keyword id="KW-0482">Metalloprotease</keyword>
<keyword id="KW-0597">Phosphoprotein</keyword>
<keyword id="KW-0645">Protease</keyword>
<keyword id="KW-1185">Reference proteome</keyword>
<keyword id="KW-0735">Signal-anchor</keyword>
<keyword id="KW-0765">Sulfation</keyword>
<keyword id="KW-0812">Transmembrane</keyword>
<keyword id="KW-1133">Transmembrane helix</keyword>
<keyword id="KW-0862">Zinc</keyword>
<organism>
    <name type="scientific">Oryctolagus cuniculus</name>
    <name type="common">Rabbit</name>
    <dbReference type="NCBI Taxonomy" id="9986"/>
    <lineage>
        <taxon>Eukaryota</taxon>
        <taxon>Metazoa</taxon>
        <taxon>Chordata</taxon>
        <taxon>Craniata</taxon>
        <taxon>Vertebrata</taxon>
        <taxon>Euteleostomi</taxon>
        <taxon>Mammalia</taxon>
        <taxon>Eutheria</taxon>
        <taxon>Euarchontoglires</taxon>
        <taxon>Glires</taxon>
        <taxon>Lagomorpha</taxon>
        <taxon>Leporidae</taxon>
        <taxon>Oryctolagus</taxon>
    </lineage>
</organism>
<reference key="1">
    <citation type="journal article" date="1993" name="Biochem. Cell Biol.">
        <title>Complete sequence of rabbit kidney aminopeptidase N and mRNA localization in rabbit kidney by in situ hybridization.</title>
        <authorList>
            <person name="Yang X.F."/>
            <person name="Milhiet P.E."/>
            <person name="Gaudoux F."/>
            <person name="Crine P."/>
            <person name="Boileau G."/>
        </authorList>
    </citation>
    <scope>NUCLEOTIDE SEQUENCE [MRNA]</scope>
    <source>
        <tissue>Kidney</tissue>
    </source>
</reference>
<reference key="2">
    <citation type="journal article" date="1982" name="Biochim. Biophys. Acta">
        <title>The amino acid sequence of the hydrophobic anchor of rabbit intestinal brush border aminopeptidase N.</title>
        <authorList>
            <person name="Feracci H."/>
            <person name="Maroux S."/>
            <person name="Bonicel J."/>
            <person name="Desnuelle P."/>
        </authorList>
    </citation>
    <scope>PROTEIN SEQUENCE OF 6-19</scope>
</reference>
<reference key="3">
    <citation type="journal article" date="1989" name="FEBS Lett.">
        <title>Onset of transcription of the aminopeptidase N (leukemia antigen CD 13) gene at the crypt/villus transition zone during rabbit enterocyte differentiation.</title>
        <authorList>
            <person name="Noren O."/>
            <person name="Dabelsteen E."/>
            <person name="Hoeyer P.E."/>
            <person name="Olsen J."/>
            <person name="Sjoestroem H."/>
            <person name="Hansen G.H."/>
        </authorList>
    </citation>
    <scope>NUCLEOTIDE SEQUENCE [MRNA] OF 178-966</scope>
</reference>
<proteinExistence type="evidence at protein level"/>
<comment type="function">
    <text evidence="1 3">Broad specificity aminopeptidase which plays a role in the final digestion of peptides generated from hydrolysis of proteins by gastric and pancreatic proteases. Also involved in the processing of various peptides including peptide hormones, such as angiotensin III and IV, neuropeptides, and chemokines. May also be involved the cleavage of peptides bound to major histocompatibility complex class II molecules of antigen presenting cells. May have a role in angiogenesis and promote cholesterol crystallization. May have a role in amino acid transport by acting as binding partner of amino acid transporter SLC6A19 and regulating its activity (By similarity).</text>
</comment>
<comment type="catalytic activity">
    <reaction evidence="1">
        <text>Release of an N-terminal amino acid, Xaa-|-Yaa- from a peptide, amide or arylamide. Xaa is preferably Ala, but may be most amino acids including Pro (slow action). When a terminal hydrophobic residue is followed by a prolyl residue, the two may be released as an intact Xaa-Pro dipeptide.</text>
        <dbReference type="EC" id="3.4.11.2"/>
    </reaction>
</comment>
<comment type="cofactor">
    <cofactor evidence="1">
        <name>Zn(2+)</name>
        <dbReference type="ChEBI" id="CHEBI:29105"/>
    </cofactor>
    <text evidence="1">Binds 1 zinc ion per subunit.</text>
</comment>
<comment type="subunit">
    <text evidence="1 3">Homodimer. Interacts with SLC6A19 (By similarity).</text>
</comment>
<comment type="subcellular location">
    <subcellularLocation>
        <location evidence="1">Cell membrane</location>
        <topology evidence="1">Single-pass type II membrane protein</topology>
    </subcellularLocation>
    <text evidence="1">Also found as a soluble form.</text>
</comment>
<comment type="PTM">
    <text evidence="2">Sulfated.</text>
</comment>
<comment type="PTM">
    <text evidence="1">N- and O-glycosylated.</text>
</comment>
<comment type="PTM">
    <text evidence="1">May undergo proteolysis and give rise to a soluble form.</text>
</comment>
<comment type="similarity">
    <text evidence="7">Belongs to the peptidase M1 family.</text>
</comment>
<accession>P15541</accession>
<evidence type="ECO:0000250" key="1">
    <source>
        <dbReference type="UniProtKB" id="P15144"/>
    </source>
</evidence>
<evidence type="ECO:0000250" key="2">
    <source>
        <dbReference type="UniProtKB" id="P15145"/>
    </source>
</evidence>
<evidence type="ECO:0000250" key="3">
    <source>
        <dbReference type="UniProtKB" id="P97449"/>
    </source>
</evidence>
<evidence type="ECO:0000255" key="4"/>
<evidence type="ECO:0000255" key="5">
    <source>
        <dbReference type="PROSITE-ProRule" id="PRU10095"/>
    </source>
</evidence>
<evidence type="ECO:0000256" key="6">
    <source>
        <dbReference type="SAM" id="MobiDB-lite"/>
    </source>
</evidence>
<evidence type="ECO:0000305" key="7"/>
<sequence length="966" mass="109318">MAKGFYISKSLGILGILLGVAALCTIVALSVVYRQEKNKNTSQSPSMAPLNPTATSSPATTLDQNLPWNRYRLPKTLIPDSYNVVLRPYLSPNSQGLYIFTGSSTVRFTCQEATNVIIIHSKKLNYTITQGHRVVLRGVRGSQPPAIASTELVELTEYLVVHLQGQLVAGSQYEMDTQFQGELADDLAGFYRSEYMEGNVRKVVATTQMQAADARKSFPCFDEPAMKATFNITPIHPRDYTALSNMLPRSSTALPEDPNWTVTEFHTTPKMSTYLLAYIVSEFTNIEAQSPNNVQIRIWARPSAISEGHGQYALNVTGPILNFFANHYNTPYPLEKSDQIGLPDFNAGAMENWGLVTYRESALLFDPLVSSISNKERVVTVVAHELAHQWFGNLVTVDWWNDLWLNEGFASYVEYLGADYAEPTWNLKDLIVLNELHSVMAVDALASSHPLSSPADEVNTPAQISELFDSITYSKGASVLRMLSSFLTEDLFKEGLASYLHTFAYQNTIYLDLWEHLQQAVNSQSAIQLPASVRDIMDRWILQMGFPVVTVNTTNGIISQHHFLLDPTSNVTRPSDFNYLWIVPVSSMRNGVLEQEFWLEGVEQTQNSLFRVEGDNNWILANLNVTGYYQVNYDEGNWKKLQTQLQTNPSVIPVINRAQIIHDAFNLASAQKVPVTLALDNTLFLIRETEYMPWQAALSSLNYFKLMFDRSEVYGPMKNYLSKQVRPLFEHFKNITNDWTRRPDTLMDQYNEINAISTACSNGIQECETLVSDLFKQWMDDPSNNPIHPNLRTTVYCNAIALGGEREWDFAWEQFRNATLVNEADKLRSALACSNEVWILNRYLSYTLNPDYIRRQDATSTINSIASNVIGQTLVWDFVQSNWKKLFEDFGGGSFSFANLIRAVTRRFSTEYELQQLEQFRLNNLDTGFGSGTRALEQALEQTRANIKWVQENKEAVLAWFTANSA</sequence>
<name>AMPN_RABIT</name>